<sequence length="258" mass="29028">MGALGDSAYGARGRLIKFSYIVTALISILFSISCICYGIWLLARRSQYAELVSPSLYVDVGRILVIISILSILNYLICFYAIFKEMRCFVTSCAVASIVIAVMLIIGGCIGLNFRDQLTHYTPLNLKMLTSLRELYGTHDMKGITESWDALQSNFKCCGVNGTDNAQIWKTSKWYMHQRAPKLLIPESCCIPSEIERCRSNPFDQDAPPPYYTSTCYEPLQNDLLHVMNVASWLCITNAIVQIIPSVAGCWYSKLIRK</sequence>
<dbReference type="EMBL" id="BX284601">
    <property type="protein sequence ID" value="CAB03120.2"/>
    <property type="molecule type" value="Genomic_DNA"/>
</dbReference>
<dbReference type="PIR" id="T22544">
    <property type="entry name" value="T22544"/>
</dbReference>
<dbReference type="RefSeq" id="NP_492404.1">
    <property type="nucleotide sequence ID" value="NM_060003.7"/>
</dbReference>
<dbReference type="SMR" id="Q9XVM9"/>
<dbReference type="ComplexPortal" id="CPX-1020">
    <property type="entry name" value="BLI-3/DOXA-1/TSP-15 dual oxidase complex"/>
</dbReference>
<dbReference type="FunCoup" id="Q9XVM9">
    <property type="interactions" value="2"/>
</dbReference>
<dbReference type="STRING" id="6239.F53B6.1.1"/>
<dbReference type="PaxDb" id="6239-F53B6.1"/>
<dbReference type="PeptideAtlas" id="Q9XVM9"/>
<dbReference type="EnsemblMetazoa" id="F53B6.1.1">
    <property type="protein sequence ID" value="F53B6.1.1"/>
    <property type="gene ID" value="WBGene00006641"/>
</dbReference>
<dbReference type="GeneID" id="192065"/>
<dbReference type="KEGG" id="cel:CELE_F53B6.1"/>
<dbReference type="UCSC" id="F53B6.1">
    <property type="organism name" value="c. elegans"/>
</dbReference>
<dbReference type="AGR" id="WB:WBGene00006641"/>
<dbReference type="CTD" id="192065"/>
<dbReference type="WormBase" id="F53B6.1">
    <property type="protein sequence ID" value="CE26464"/>
    <property type="gene ID" value="WBGene00006641"/>
    <property type="gene designation" value="tsp-15"/>
</dbReference>
<dbReference type="eggNOG" id="KOG3882">
    <property type="taxonomic scope" value="Eukaryota"/>
</dbReference>
<dbReference type="HOGENOM" id="CLU_105183_0_0_1"/>
<dbReference type="InParanoid" id="Q9XVM9"/>
<dbReference type="OMA" id="IWKTSKW"/>
<dbReference type="OrthoDB" id="438211at2759"/>
<dbReference type="PhylomeDB" id="Q9XVM9"/>
<dbReference type="Reactome" id="R-CEL-6798695">
    <property type="pathway name" value="Neutrophil degranulation"/>
</dbReference>
<dbReference type="PRO" id="PR:Q9XVM9"/>
<dbReference type="Proteomes" id="UP000001940">
    <property type="component" value="Chromosome I"/>
</dbReference>
<dbReference type="Bgee" id="WBGene00006641">
    <property type="expression patterns" value="Expressed in larva and 3 other cell types or tissues"/>
</dbReference>
<dbReference type="GO" id="GO:1990204">
    <property type="term" value="C:oxidoreductase complex"/>
    <property type="evidence" value="ECO:0000314"/>
    <property type="project" value="ComplexPortal"/>
</dbReference>
<dbReference type="GO" id="GO:0005886">
    <property type="term" value="C:plasma membrane"/>
    <property type="evidence" value="ECO:0000314"/>
    <property type="project" value="ComplexPortal"/>
</dbReference>
<dbReference type="GO" id="GO:0040002">
    <property type="term" value="P:collagen and cuticulin-based cuticle development"/>
    <property type="evidence" value="ECO:0000314"/>
    <property type="project" value="ComplexPortal"/>
</dbReference>
<dbReference type="GO" id="GO:0042338">
    <property type="term" value="P:cuticle development involved in collagen and cuticulin-based cuticle molting cycle"/>
    <property type="evidence" value="ECO:0000315"/>
    <property type="project" value="WormBase"/>
</dbReference>
<dbReference type="GO" id="GO:0098773">
    <property type="term" value="P:skin epidermis development"/>
    <property type="evidence" value="ECO:0000315"/>
    <property type="project" value="WormBase"/>
</dbReference>
<dbReference type="CDD" id="cd03156">
    <property type="entry name" value="uroplakin_I_like_LEL"/>
    <property type="match status" value="1"/>
</dbReference>
<dbReference type="Gene3D" id="1.10.1450.10">
    <property type="entry name" value="Tetraspanin"/>
    <property type="match status" value="1"/>
</dbReference>
<dbReference type="InterPro" id="IPR018499">
    <property type="entry name" value="Tetraspanin/Peripherin"/>
</dbReference>
<dbReference type="InterPro" id="IPR008952">
    <property type="entry name" value="Tetraspanin_EC2_sf"/>
</dbReference>
<dbReference type="PANTHER" id="PTHR19282:SF452">
    <property type="entry name" value="LD03691P"/>
    <property type="match status" value="1"/>
</dbReference>
<dbReference type="PANTHER" id="PTHR19282">
    <property type="entry name" value="TETRASPANIN"/>
    <property type="match status" value="1"/>
</dbReference>
<dbReference type="Pfam" id="PF00335">
    <property type="entry name" value="Tetraspanin"/>
    <property type="match status" value="1"/>
</dbReference>
<dbReference type="SUPFAM" id="SSF48652">
    <property type="entry name" value="Tetraspanin"/>
    <property type="match status" value="1"/>
</dbReference>
<name>TSN15_CAEEL</name>
<evidence type="ECO:0000255" key="1"/>
<evidence type="ECO:0000269" key="2">
    <source>
    </source>
</evidence>
<evidence type="ECO:0000269" key="3">
    <source>
    </source>
</evidence>
<evidence type="ECO:0000269" key="4">
    <source>
    </source>
</evidence>
<evidence type="ECO:0000269" key="5">
    <source>
    </source>
</evidence>
<evidence type="ECO:0000305" key="6"/>
<evidence type="ECO:0000312" key="7">
    <source>
        <dbReference type="Proteomes" id="UP000001940"/>
    </source>
</evidence>
<evidence type="ECO:0000312" key="8">
    <source>
        <dbReference type="WormBase" id="F53B6.1"/>
    </source>
</evidence>
<keyword id="KW-0472">Membrane</keyword>
<keyword id="KW-1185">Reference proteome</keyword>
<keyword id="KW-0812">Transmembrane</keyword>
<keyword id="KW-1133">Transmembrane helix</keyword>
<organism evidence="7">
    <name type="scientific">Caenorhabditis elegans</name>
    <dbReference type="NCBI Taxonomy" id="6239"/>
    <lineage>
        <taxon>Eukaryota</taxon>
        <taxon>Metazoa</taxon>
        <taxon>Ecdysozoa</taxon>
        <taxon>Nematoda</taxon>
        <taxon>Chromadorea</taxon>
        <taxon>Rhabditida</taxon>
        <taxon>Rhabditina</taxon>
        <taxon>Rhabditomorpha</taxon>
        <taxon>Rhabditoidea</taxon>
        <taxon>Rhabditidae</taxon>
        <taxon>Peloderinae</taxon>
        <taxon>Caenorhabditis</taxon>
    </lineage>
</organism>
<reference evidence="7" key="1">
    <citation type="journal article" date="1998" name="Science">
        <title>Genome sequence of the nematode C. elegans: a platform for investigating biology.</title>
        <authorList>
            <consortium name="The C. elegans sequencing consortium"/>
        </authorList>
    </citation>
    <scope>NUCLEOTIDE SEQUENCE [LARGE SCALE GENOMIC DNA]</scope>
    <source>
        <strain evidence="7">Bristol N2</strain>
    </source>
</reference>
<reference evidence="6" key="2">
    <citation type="journal article" date="2004" name="J. Cell Sci.">
        <title>Tetraspanin protein (TSP-15) is required for epidermal integrity in Caenorhabditis elegans.</title>
        <authorList>
            <person name="Moribe H."/>
            <person name="Yochem J."/>
            <person name="Yamada H."/>
            <person name="Tabuse Y."/>
            <person name="Fujimoto T."/>
            <person name="Mekada E."/>
        </authorList>
    </citation>
    <scope>FUNCTION</scope>
    <scope>TISSUE SPECIFICITY</scope>
    <scope>DEVELOPMENTAL STAGE</scope>
    <scope>DISRUPTION PHENOTYPE</scope>
</reference>
<reference evidence="6" key="3">
    <citation type="journal article" date="2012" name="PLoS Genet.">
        <title>Tetraspanin is required for generation of reactive oxygen species by the dual oxidase system in Caenorhabditis elegans.</title>
        <authorList>
            <person name="Moribe H."/>
            <person name="Konakawa R."/>
            <person name="Koga D."/>
            <person name="Ushiki T."/>
            <person name="Nakamura K."/>
            <person name="Mekada E."/>
        </authorList>
    </citation>
    <scope>FUNCTION</scope>
    <scope>INTERACTION WITH DOXA-1 AND BLI-3</scope>
    <scope>DEVELOPMENTAL STAGE</scope>
    <scope>DISRUPTION PHENOTYPE</scope>
</reference>
<reference evidence="6" key="4">
    <citation type="journal article" date="2015" name="G3 (Bethesda)">
        <title>The BLI-3/TSP-15/DOXA-1 dual oxidase complex is required for iodide toxicity in Caenorhabditis elegans.</title>
        <authorList>
            <person name="Xu Z."/>
            <person name="Luo J."/>
            <person name="Li Y."/>
            <person name="Ma L."/>
        </authorList>
    </citation>
    <scope>FUNCTION</scope>
    <scope>DISRUPTION PHENOTYPE</scope>
    <scope>MUTAGENESIS OF GLY-249</scope>
</reference>
<reference key="5">
    <citation type="journal article" date="2023" name="PLoS Genet.">
        <title>Casein kinase 1 gamma regulates oxidative stress response via interacting with the NADPH dual oxidase complex.</title>
        <authorList>
            <person name="Hu Y."/>
            <person name="Xu Z."/>
            <person name="Pan Q."/>
            <person name="Ma L."/>
        </authorList>
    </citation>
    <scope>MUTAGENESIS OF GLY-111</scope>
</reference>
<proteinExistence type="evidence at protein level"/>
<protein>
    <recommendedName>
        <fullName evidence="8">Tetraspanin-15</fullName>
    </recommendedName>
</protein>
<feature type="chain" id="PRO_0000433623" description="Tetraspanin-15" evidence="6">
    <location>
        <begin position="1"/>
        <end position="258"/>
    </location>
</feature>
<feature type="topological domain" description="Cytoplasmic" evidence="6">
    <location>
        <begin position="1"/>
        <end position="20"/>
    </location>
</feature>
<feature type="transmembrane region" description="Helical" evidence="1">
    <location>
        <begin position="21"/>
        <end position="41"/>
    </location>
</feature>
<feature type="topological domain" description="Extracellular" evidence="6">
    <location>
        <begin position="42"/>
        <end position="62"/>
    </location>
</feature>
<feature type="transmembrane region" description="Helical" evidence="1">
    <location>
        <begin position="63"/>
        <end position="83"/>
    </location>
</feature>
<feature type="topological domain" description="Cytoplasmic" evidence="6">
    <location>
        <begin position="84"/>
        <end position="93"/>
    </location>
</feature>
<feature type="transmembrane region" description="Helical" evidence="1">
    <location>
        <begin position="94"/>
        <end position="114"/>
    </location>
</feature>
<feature type="topological domain" description="Extracellular" evidence="6">
    <location>
        <begin position="115"/>
        <end position="223"/>
    </location>
</feature>
<feature type="transmembrane region" description="Helical" evidence="1">
    <location>
        <begin position="224"/>
        <end position="244"/>
    </location>
</feature>
<feature type="topological domain" description="Cytoplasmic" evidence="6">
    <location>
        <begin position="245"/>
        <end position="258"/>
    </location>
</feature>
<feature type="mutagenesis site" description="In mac499; resistance to iodide toxicity." evidence="5">
    <original>G</original>
    <variation>R</variation>
    <location>
        <position position="111"/>
    </location>
</feature>
<feature type="mutagenesis site" description="In mac33; blistered cuticle phenotype with blisters containing cellular material. Resistant to iodide toxicity." evidence="4">
    <original>G</original>
    <variation>R</variation>
    <location>
        <position position="249"/>
    </location>
</feature>
<accession>Q9XVM9</accession>
<comment type="function">
    <text evidence="2 3 4">Plays a role in cuticle biogenesis (PubMed:15454573, PubMed:23028364, PubMed:25480962). In complex with doxa-1 and the dual oxidase bli-3, promotes the generation of reactive oxygen species (ROS) and tyrosine cross-linking of collagen, thus stabilizing cuticular extracellular matrix (PubMed:23028364).</text>
</comment>
<comment type="subunit">
    <text evidence="3">Interacts with doxa-1 and bli-3.</text>
</comment>
<comment type="subcellular location">
    <subcellularLocation>
        <location evidence="1">Membrane</location>
        <topology evidence="1">Multi-pass membrane protein</topology>
    </subcellularLocation>
</comment>
<comment type="tissue specificity">
    <text evidence="2">Expressed in the body wall (hyp7 hypodermal syncitium), pharynx and vulva. Expressed in a punctate pattern along the thick region of the hypodermis.</text>
</comment>
<comment type="developmental stage">
    <text evidence="2 3">Expressed in cells along the anteroposterior axis from the 1.5-fold stage of embryogenesis until the 3-fold stage when expression decreases but increases in the body surface with prominent expression in the lateral hypodermal cells (PubMed:15454573, PubMed:23028364). Expressed in the pharynx and body wall from the larval stage to adulthood.</text>
</comment>
<comment type="disruption phenotype">
    <text evidence="2 3 4">Embryonic lethal (PubMed:23028364). Mutants display dumpy and blistered cuticle phenotypes (PubMed:23028364). Blisters contain unidentified cellular material (PubMed:23028364, PubMed:25480962). Resistant to iodide toxicity (PubMed:25480962). RNAi-mediated knockdown results in the lethality of more than 95% of progeny at the larval stage (PubMed:15454573). Most larval arrest occurs at the L4 larval stage and is characterized by body swelling and abnormal epidermal morphology, which includes blistering of the cuticle (PubMed:15454573, PubMed:25480962). The few animals that develop into adults have a distended body shape and/or epidermal blistering (PubMed:15454573). Abnormal cuticular and hypodermal morphology including splits in the cortical layer of the cuticle, abnormal gaps between the hypodermis and musculature and inconsistent thickness of the hypodermis (PubMed:15454573, PubMed:25480962). Impaired hypodermal membrane integrity and reduced fibrous organelles (PubMed:15454573).</text>
</comment>
<comment type="similarity">
    <text evidence="6">Belongs to the tetraspanin (TM4SF) family.</text>
</comment>
<gene>
    <name evidence="8" type="primary">tsp-15</name>
    <name evidence="8" type="ORF">F53B6.1</name>
</gene>